<keyword id="KW-0966">Cell projection</keyword>
<keyword id="KW-0963">Cytoplasm</keyword>
<keyword id="KW-0539">Nucleus</keyword>
<keyword id="KW-1185">Reference proteome</keyword>
<keyword id="KW-0833">Ubl conjugation pathway</keyword>
<accession>O45495</accession>
<dbReference type="EMBL" id="BX284601">
    <property type="protein sequence ID" value="CAB07383.1"/>
    <property type="molecule type" value="Genomic_DNA"/>
</dbReference>
<dbReference type="PIR" id="T21984">
    <property type="entry name" value="T21984"/>
</dbReference>
<dbReference type="RefSeq" id="NP_493578.1">
    <property type="nucleotide sequence ID" value="NM_061177.6"/>
</dbReference>
<dbReference type="SMR" id="O45495"/>
<dbReference type="ComplexPortal" id="CPX-4625">
    <property type="entry name" value="ubc-13-uev-1 ubiquitin-conjugating enzyme E2 complex"/>
</dbReference>
<dbReference type="FunCoup" id="O45495">
    <property type="interactions" value="3735"/>
</dbReference>
<dbReference type="IntAct" id="O45495">
    <property type="interactions" value="8"/>
</dbReference>
<dbReference type="MINT" id="O45495"/>
<dbReference type="STRING" id="6239.F39B2.2.1"/>
<dbReference type="PaxDb" id="6239-F39B2.2.1"/>
<dbReference type="PeptideAtlas" id="O45495"/>
<dbReference type="EnsemblMetazoa" id="F39B2.2.1">
    <property type="protein sequence ID" value="F39B2.2.1"/>
    <property type="gene ID" value="WBGene00006730"/>
</dbReference>
<dbReference type="GeneID" id="173347"/>
<dbReference type="KEGG" id="cel:CELE_F39B2.2"/>
<dbReference type="UCSC" id="F39B2.2.1">
    <property type="organism name" value="c. elegans"/>
</dbReference>
<dbReference type="AGR" id="WB:WBGene00006730"/>
<dbReference type="CTD" id="173347"/>
<dbReference type="WormBase" id="F39B2.2">
    <property type="protein sequence ID" value="CE16008"/>
    <property type="gene ID" value="WBGene00006730"/>
    <property type="gene designation" value="uev-1"/>
</dbReference>
<dbReference type="eggNOG" id="KOG0896">
    <property type="taxonomic scope" value="Eukaryota"/>
</dbReference>
<dbReference type="GeneTree" id="ENSGT00740000115534"/>
<dbReference type="HOGENOM" id="CLU_063065_3_0_1"/>
<dbReference type="InParanoid" id="O45495"/>
<dbReference type="OMA" id="GPESCSY"/>
<dbReference type="OrthoDB" id="6508832at2759"/>
<dbReference type="PhylomeDB" id="O45495"/>
<dbReference type="Reactome" id="R-CEL-9020702">
    <property type="pathway name" value="Interleukin-1 signaling"/>
</dbReference>
<dbReference type="Reactome" id="R-CEL-9646399">
    <property type="pathway name" value="Aggrephagy"/>
</dbReference>
<dbReference type="Reactome" id="R-CEL-983168">
    <property type="pathway name" value="Antigen processing: Ubiquitination &amp; Proteasome degradation"/>
</dbReference>
<dbReference type="PRO" id="PR:O45495"/>
<dbReference type="Proteomes" id="UP000001940">
    <property type="component" value="Chromosome I"/>
</dbReference>
<dbReference type="Bgee" id="WBGene00006730">
    <property type="expression patterns" value="Expressed in germ line (C elegans) and 4 other cell types or tissues"/>
</dbReference>
<dbReference type="GO" id="GO:0005829">
    <property type="term" value="C:cytosol"/>
    <property type="evidence" value="ECO:0000314"/>
    <property type="project" value="WormBase"/>
</dbReference>
<dbReference type="GO" id="GO:0030425">
    <property type="term" value="C:dendrite"/>
    <property type="evidence" value="ECO:0007669"/>
    <property type="project" value="UniProtKB-SubCell"/>
</dbReference>
<dbReference type="GO" id="GO:0043005">
    <property type="term" value="C:neuron projection"/>
    <property type="evidence" value="ECO:0000314"/>
    <property type="project" value="WormBase"/>
</dbReference>
<dbReference type="GO" id="GO:0005634">
    <property type="term" value="C:nucleus"/>
    <property type="evidence" value="ECO:0000314"/>
    <property type="project" value="WormBase"/>
</dbReference>
<dbReference type="GO" id="GO:0043204">
    <property type="term" value="C:perikaryon"/>
    <property type="evidence" value="ECO:0007669"/>
    <property type="project" value="UniProtKB-SubCell"/>
</dbReference>
<dbReference type="GO" id="GO:0031372">
    <property type="term" value="C:UBC13-MMS2 complex"/>
    <property type="evidence" value="ECO:0000353"/>
    <property type="project" value="ComplexPortal"/>
</dbReference>
<dbReference type="GO" id="GO:0031371">
    <property type="term" value="C:ubiquitin conjugating enzyme complex"/>
    <property type="evidence" value="ECO:0000318"/>
    <property type="project" value="GO_Central"/>
</dbReference>
<dbReference type="GO" id="GO:0031624">
    <property type="term" value="F:ubiquitin conjugating enzyme binding"/>
    <property type="evidence" value="ECO:0000353"/>
    <property type="project" value="WormBase"/>
</dbReference>
<dbReference type="GO" id="GO:1902533">
    <property type="term" value="P:positive regulation of intracellular signal transduction"/>
    <property type="evidence" value="ECO:0000303"/>
    <property type="project" value="ComplexPortal"/>
</dbReference>
<dbReference type="GO" id="GO:1902523">
    <property type="term" value="P:positive regulation of protein K63-linked ubiquitination"/>
    <property type="evidence" value="ECO:0000303"/>
    <property type="project" value="ComplexPortal"/>
</dbReference>
<dbReference type="GO" id="GO:0006301">
    <property type="term" value="P:postreplication repair"/>
    <property type="evidence" value="ECO:0000318"/>
    <property type="project" value="GO_Central"/>
</dbReference>
<dbReference type="GO" id="GO:0070534">
    <property type="term" value="P:protein K63-linked ubiquitination"/>
    <property type="evidence" value="ECO:0000318"/>
    <property type="project" value="GO_Central"/>
</dbReference>
<dbReference type="GO" id="GO:0090325">
    <property type="term" value="P:regulation of locomotion involved in locomotory behavior"/>
    <property type="evidence" value="ECO:0000315"/>
    <property type="project" value="WormBase"/>
</dbReference>
<dbReference type="GO" id="GO:2000008">
    <property type="term" value="P:regulation of protein localization to cell surface"/>
    <property type="evidence" value="ECO:0000315"/>
    <property type="project" value="WormBase"/>
</dbReference>
<dbReference type="CDD" id="cd23807">
    <property type="entry name" value="UEV_UBE2V"/>
    <property type="match status" value="1"/>
</dbReference>
<dbReference type="FunFam" id="3.10.110.10:FF:000026">
    <property type="entry name" value="Ubiquitin-conjugating enzyme E2 variant"/>
    <property type="match status" value="1"/>
</dbReference>
<dbReference type="Gene3D" id="3.10.110.10">
    <property type="entry name" value="Ubiquitin Conjugating Enzyme"/>
    <property type="match status" value="1"/>
</dbReference>
<dbReference type="InterPro" id="IPR000608">
    <property type="entry name" value="UBQ-conjugat_E2_core"/>
</dbReference>
<dbReference type="InterPro" id="IPR016135">
    <property type="entry name" value="UBQ-conjugating_enzyme/RWD"/>
</dbReference>
<dbReference type="PANTHER" id="PTHR24068">
    <property type="entry name" value="UBIQUITIN-CONJUGATING ENZYME E2"/>
    <property type="match status" value="1"/>
</dbReference>
<dbReference type="Pfam" id="PF00179">
    <property type="entry name" value="UQ_con"/>
    <property type="match status" value="1"/>
</dbReference>
<dbReference type="SMART" id="SM00212">
    <property type="entry name" value="UBCc"/>
    <property type="match status" value="1"/>
</dbReference>
<dbReference type="SUPFAM" id="SSF54495">
    <property type="entry name" value="UBC-like"/>
    <property type="match status" value="1"/>
</dbReference>
<dbReference type="PROSITE" id="PS50127">
    <property type="entry name" value="UBC_2"/>
    <property type="match status" value="1"/>
</dbReference>
<name>UB2V1_CAEEL</name>
<feature type="chain" id="PRO_0000434946" description="Ubiquitin-conjugating enzyme E2 variant 1" evidence="7">
    <location>
        <begin position="1"/>
        <end position="139"/>
    </location>
</feature>
<feature type="domain" description="UBC core" evidence="1">
    <location>
        <begin position="5"/>
        <end position="139"/>
    </location>
</feature>
<feature type="mutagenesis site" description="Does not bind to ubc-13." evidence="4">
    <original>F</original>
    <variation>A</variation>
    <location>
        <position position="8"/>
    </location>
</feature>
<sequence length="139" mass="15921">MVDVPRNFRLLEELEEGQKGKGDGNISWGLEDDSDMTLTRWTASIIGPPRTPYESRIYNLQIQCGGNYPREPPTVRFTTKVHMVGVNQSNGVIDKRNLTTLRNWSNSYMIKTVLEDIRKNMMMAKENLKLQQPAEGAMF</sequence>
<gene>
    <name evidence="9" type="primary">uev-1</name>
    <name evidence="9" type="ORF">F39B2.2</name>
</gene>
<reference evidence="8" key="1">
    <citation type="journal article" date="1998" name="Science">
        <title>Genome sequence of the nematode C. elegans: a platform for investigating biology.</title>
        <authorList>
            <consortium name="The C. elegans sequencing consortium"/>
        </authorList>
    </citation>
    <scope>NUCLEOTIDE SEQUENCE [LARGE SCALE GENOMIC DNA]</scope>
    <source>
        <strain evidence="8">Bristol N2</strain>
    </source>
</reference>
<reference key="2">
    <citation type="journal article" date="2004" name="Biochem. Biophys. Res. Commun.">
        <title>Interactions within the ubiquitin pathway of Caenorhabditis elegans.</title>
        <authorList>
            <person name="Gudgen M."/>
            <person name="Chandrasekaran A."/>
            <person name="Frazier T."/>
            <person name="Boyd L."/>
        </authorList>
    </citation>
    <scope>FUNCTION</scope>
    <scope>INTERACTION WITH UBC-13</scope>
</reference>
<reference key="3">
    <citation type="journal article" date="2007" name="BMC Cell Biol.">
        <title>Ubiquitin conjugating enzymes participate in polyglutamine protein aggregation.</title>
        <authorList>
            <person name="Howard R.A."/>
            <person name="Sharma P."/>
            <person name="Hajjar C."/>
            <person name="Caldwell K.A."/>
            <person name="Caldwell G.A."/>
            <person name="du Breuil R."/>
            <person name="Moore R."/>
            <person name="Boyd L."/>
        </authorList>
    </citation>
    <scope>FUNCTION</scope>
    <scope>DISRUPTION PHENOTYPE</scope>
</reference>
<reference evidence="7" key="4">
    <citation type="journal article" date="2010" name="PLoS ONE">
        <title>UEV-1 is an ubiquitin-conjugating enzyme variant that regulates glutamate receptor trafficking in C. elegans neurons.</title>
        <authorList>
            <person name="Kramer L.B."/>
            <person name="Shim J."/>
            <person name="Previtera M.L."/>
            <person name="Isack N.R."/>
            <person name="Lee M.C."/>
            <person name="Firestein B.L."/>
            <person name="Rongo C."/>
        </authorList>
    </citation>
    <scope>FUNCTION</scope>
    <scope>INTERACTION WITH UBC-13</scope>
    <scope>SUBCELLULAR LOCATION</scope>
    <scope>TISSUE SPECIFICITY</scope>
    <scope>DEVELOPMENTAL STAGE</scope>
    <scope>DISRUPTION PHENOTYPE</scope>
    <scope>MUTAGENESIS OF PHE-8</scope>
</reference>
<reference evidence="7" key="5">
    <citation type="journal article" date="2012" name="BMC Cell Biol.">
        <title>Ubiquitination is involved in secondary growth, not initial formation of polyglutamine protein aggregates in C. elegans.</title>
        <authorList>
            <person name="Skibinski G.A."/>
            <person name="Boyd L."/>
        </authorList>
    </citation>
    <scope>FUNCTION</scope>
</reference>
<reference evidence="7" key="6">
    <citation type="journal article" date="2014" name="Development">
        <title>Fertilization-induced K63-linked ubiquitylation mediates clearance of maternal membrane proteins.</title>
        <authorList>
            <person name="Sato M."/>
            <person name="Konuma R."/>
            <person name="Sato K."/>
            <person name="Tomura K."/>
            <person name="Sato K."/>
        </authorList>
    </citation>
    <scope>FUNCTION</scope>
    <scope>DISRUPTION PHENOTYPE</scope>
</reference>
<protein>
    <recommendedName>
        <fullName evidence="9">Ubiquitin-conjugating enzyme E2 variant 1</fullName>
    </recommendedName>
</protein>
<proteinExistence type="evidence at protein level"/>
<organism evidence="8">
    <name type="scientific">Caenorhabditis elegans</name>
    <dbReference type="NCBI Taxonomy" id="6239"/>
    <lineage>
        <taxon>Eukaryota</taxon>
        <taxon>Metazoa</taxon>
        <taxon>Ecdysozoa</taxon>
        <taxon>Nematoda</taxon>
        <taxon>Chromadorea</taxon>
        <taxon>Rhabditida</taxon>
        <taxon>Rhabditina</taxon>
        <taxon>Rhabditomorpha</taxon>
        <taxon>Rhabditoidea</taxon>
        <taxon>Rhabditidae</taxon>
        <taxon>Peloderinae</taxon>
        <taxon>Caenorhabditis</taxon>
    </lineage>
</organism>
<comment type="function">
    <text evidence="2 3 4 5 6">Involved in protein ubiquitination, but has no ubiquitin ligase activity on its own (PubMed:15530417). The uev-1-ubc-13 heterodimer catalyzes the synthesis of non-canonical poly-ubiquitin chains that are linked through Lys-63 (PubMed:15530417, PubMed:24595290). Involved in sorting Lys-63-linked polyubiquitinated maternal membrane proteins for degradation by targeting to multivesicular bodies (PubMed:24595290). Required for glr-1-containing glutamate receptor trafficking in neurons (PubMed:21179194). May have a role in synaptic transmission at motorneurons (PubMed:21179194). May be involved in the ubiquitination and growth of intracellular polyglutamine protein aggregates (PubMed:17663792, PubMed:22494772).</text>
</comment>
<comment type="subunit">
    <text evidence="2 4">Heterodimer with ubc-13.</text>
</comment>
<comment type="subcellular location">
    <subcellularLocation>
        <location evidence="4">Cytoplasm</location>
        <location evidence="4">Cytosol</location>
    </subcellularLocation>
    <subcellularLocation>
        <location evidence="4">Nucleus</location>
    </subcellularLocation>
    <subcellularLocation>
        <location evidence="4">Cell projection</location>
        <location evidence="4">Dendrite</location>
    </subcellularLocation>
    <subcellularLocation>
        <location evidence="4">Perikaryon</location>
    </subcellularLocation>
</comment>
<comment type="tissue specificity">
    <text evidence="4">Expressed in the pharynx, body wall muscle cells, vulval epithelia, distal tip cell, intestine, tail, head neurons and ventral cord motorneurons.</text>
</comment>
<comment type="developmental stage">
    <text evidence="4">Expressed from embryo to adulthood.</text>
</comment>
<comment type="disruption phenotype">
    <text evidence="3 4 6">Temperature sensitive with partial embryonic lethality at 25 degrees Celsius (PubMed:24595290). Inhibited degradation of maternal membrane proteins, cav-1, chs-1 and rme-2, and ubiquitination of cav-1 with accumulation of these proteins on the maternal plasma membrane and endosome-like vesicles in later-stage embryos (PubMed:24595290). Locomotion defect with animals displaying increased body flexing (PubMed:21179194). Mis-localized glr-1-containing glutamate receptor with increased glr-1 accumulation in the ventral nerve cord (PubMed:21179194). Reduced and irregular snb-1 accumulation at neuromuscular junctions (PubMed:21179194). RNAi-mediated knockdown prevents localization of ubiquitin and proteasomes to polyglutamine protein aggregates (PubMed:17663792). Reduced size of polyglutamine protein aggregates (PubMed:17663792). Inhibited degradation of the maternal membrane protein, cav-1 in embryos (PubMed:24595290).</text>
</comment>
<comment type="similarity">
    <text evidence="1">Belongs to the ubiquitin-conjugating enzyme family.</text>
</comment>
<comment type="caution">
    <text evidence="2">Has no ubiquitin ligase activity on its own; may require ubiquitin-conjugating enzyme, ubc-13.</text>
</comment>
<evidence type="ECO:0000255" key="1">
    <source>
        <dbReference type="PROSITE-ProRule" id="PRU00388"/>
    </source>
</evidence>
<evidence type="ECO:0000269" key="2">
    <source>
    </source>
</evidence>
<evidence type="ECO:0000269" key="3">
    <source>
    </source>
</evidence>
<evidence type="ECO:0000269" key="4">
    <source>
    </source>
</evidence>
<evidence type="ECO:0000269" key="5">
    <source>
    </source>
</evidence>
<evidence type="ECO:0000269" key="6">
    <source>
    </source>
</evidence>
<evidence type="ECO:0000305" key="7"/>
<evidence type="ECO:0000312" key="8">
    <source>
        <dbReference type="Proteomes" id="UP000001940"/>
    </source>
</evidence>
<evidence type="ECO:0000312" key="9">
    <source>
        <dbReference type="WormBase" id="F39B2.2"/>
    </source>
</evidence>